<accession>Q5H505</accession>
<reference key="1">
    <citation type="journal article" date="2005" name="Nucleic Acids Res.">
        <title>The genome sequence of Xanthomonas oryzae pathovar oryzae KACC10331, the bacterial blight pathogen of rice.</title>
        <authorList>
            <person name="Lee B.-M."/>
            <person name="Park Y.-J."/>
            <person name="Park D.-S."/>
            <person name="Kang H.-W."/>
            <person name="Kim J.-G."/>
            <person name="Song E.-S."/>
            <person name="Park I.-C."/>
            <person name="Yoon U.-H."/>
            <person name="Hahn J.-H."/>
            <person name="Koo B.-S."/>
            <person name="Lee G.-B."/>
            <person name="Kim H."/>
            <person name="Park H.-S."/>
            <person name="Yoon K.-O."/>
            <person name="Kim J.-H."/>
            <person name="Jung C.-H."/>
            <person name="Koh N.-H."/>
            <person name="Seo J.-S."/>
            <person name="Go S.-J."/>
        </authorList>
    </citation>
    <scope>NUCLEOTIDE SEQUENCE [LARGE SCALE GENOMIC DNA]</scope>
    <source>
        <strain>KACC10331 / KXO85</strain>
    </source>
</reference>
<feature type="chain" id="PRO_0000261990" description="Nucleotide-binding protein XOO0711">
    <location>
        <begin position="1"/>
        <end position="161"/>
    </location>
</feature>
<organism>
    <name type="scientific">Xanthomonas oryzae pv. oryzae (strain KACC10331 / KXO85)</name>
    <dbReference type="NCBI Taxonomy" id="291331"/>
    <lineage>
        <taxon>Bacteria</taxon>
        <taxon>Pseudomonadati</taxon>
        <taxon>Pseudomonadota</taxon>
        <taxon>Gammaproteobacteria</taxon>
        <taxon>Lysobacterales</taxon>
        <taxon>Lysobacteraceae</taxon>
        <taxon>Xanthomonas</taxon>
    </lineage>
</organism>
<evidence type="ECO:0000255" key="1">
    <source>
        <dbReference type="HAMAP-Rule" id="MF_00632"/>
    </source>
</evidence>
<evidence type="ECO:0000305" key="2"/>
<dbReference type="EMBL" id="AE013598">
    <property type="protein sequence ID" value="AAW73965.1"/>
    <property type="status" value="ALT_INIT"/>
    <property type="molecule type" value="Genomic_DNA"/>
</dbReference>
<dbReference type="SMR" id="Q5H505"/>
<dbReference type="STRING" id="291331.XOO0711"/>
<dbReference type="KEGG" id="xoo:XOO0711"/>
<dbReference type="HOGENOM" id="CLU_099839_1_0_6"/>
<dbReference type="Proteomes" id="UP000006735">
    <property type="component" value="Chromosome"/>
</dbReference>
<dbReference type="GO" id="GO:0005829">
    <property type="term" value="C:cytosol"/>
    <property type="evidence" value="ECO:0007669"/>
    <property type="project" value="TreeGrafter"/>
</dbReference>
<dbReference type="GO" id="GO:0000166">
    <property type="term" value="F:nucleotide binding"/>
    <property type="evidence" value="ECO:0007669"/>
    <property type="project" value="TreeGrafter"/>
</dbReference>
<dbReference type="CDD" id="cd11740">
    <property type="entry name" value="YajQ_like"/>
    <property type="match status" value="1"/>
</dbReference>
<dbReference type="FunFam" id="3.30.70.990:FF:000001">
    <property type="entry name" value="UPF0234 protein YajQ"/>
    <property type="match status" value="1"/>
</dbReference>
<dbReference type="Gene3D" id="3.30.70.860">
    <property type="match status" value="1"/>
</dbReference>
<dbReference type="Gene3D" id="3.30.70.990">
    <property type="entry name" value="YajQ-like, domain 2"/>
    <property type="match status" value="1"/>
</dbReference>
<dbReference type="HAMAP" id="MF_00632">
    <property type="entry name" value="YajQ"/>
    <property type="match status" value="1"/>
</dbReference>
<dbReference type="InterPro" id="IPR007551">
    <property type="entry name" value="DUF520"/>
</dbReference>
<dbReference type="InterPro" id="IPR035571">
    <property type="entry name" value="UPF0234-like_C"/>
</dbReference>
<dbReference type="InterPro" id="IPR035570">
    <property type="entry name" value="UPF0234_N"/>
</dbReference>
<dbReference type="InterPro" id="IPR036183">
    <property type="entry name" value="YajQ-like_sf"/>
</dbReference>
<dbReference type="NCBIfam" id="NF003819">
    <property type="entry name" value="PRK05412.1"/>
    <property type="match status" value="1"/>
</dbReference>
<dbReference type="PANTHER" id="PTHR30476">
    <property type="entry name" value="UPF0234 PROTEIN YAJQ"/>
    <property type="match status" value="1"/>
</dbReference>
<dbReference type="PANTHER" id="PTHR30476:SF0">
    <property type="entry name" value="UPF0234 PROTEIN YAJQ"/>
    <property type="match status" value="1"/>
</dbReference>
<dbReference type="Pfam" id="PF04461">
    <property type="entry name" value="DUF520"/>
    <property type="match status" value="1"/>
</dbReference>
<dbReference type="SUPFAM" id="SSF89963">
    <property type="entry name" value="YajQ-like"/>
    <property type="match status" value="2"/>
</dbReference>
<sequence>MPSFDVVSEVNKHELTNAVDQANRELDTRFDFKGVQAKFELEDGKVINQSAPSDFQVKQMTDILRARLLARGIDVRCLEFGDMETNLAGARQKVTVKQGIEQKQAKQLVAKLKEAKLKVEAQINGDKLRITGKKRDDLQDAIALLKKADFELPLQFDNFRD</sequence>
<keyword id="KW-0547">Nucleotide-binding</keyword>
<keyword id="KW-1185">Reference proteome</keyword>
<protein>
    <recommendedName>
        <fullName evidence="1">Nucleotide-binding protein XOO0711</fullName>
    </recommendedName>
</protein>
<gene>
    <name type="ordered locus">XOO0711</name>
</gene>
<comment type="function">
    <text evidence="1">Nucleotide-binding protein.</text>
</comment>
<comment type="similarity">
    <text evidence="1">Belongs to the YajQ family.</text>
</comment>
<comment type="sequence caution" evidence="2">
    <conflict type="erroneous initiation">
        <sequence resource="EMBL-CDS" id="AAW73965"/>
    </conflict>
</comment>
<name>Y711_XANOR</name>
<proteinExistence type="inferred from homology"/>